<comment type="catalytic activity">
    <reaction evidence="1">
        <text>allantoate + H2O = (S)-ureidoglycolate + urea</text>
        <dbReference type="Rhea" id="RHEA:11016"/>
        <dbReference type="ChEBI" id="CHEBI:15377"/>
        <dbReference type="ChEBI" id="CHEBI:16199"/>
        <dbReference type="ChEBI" id="CHEBI:17536"/>
        <dbReference type="ChEBI" id="CHEBI:57296"/>
        <dbReference type="EC" id="3.5.3.4"/>
    </reaction>
</comment>
<comment type="pathway">
    <text evidence="1">Nitrogen metabolism; (S)-allantoin degradation; (S)-ureidoglycolate from allantoate (aminidohydrolase route): step 1/1.</text>
</comment>
<comment type="similarity">
    <text evidence="1">Belongs to the allantoicase family.</text>
</comment>
<sequence>MAAPILDPNAPAFTRRYMNLADPRLGAKALFASDEFFAPKERMLDPEPAVFIPGKYDDHGKWMDGWETRRKRTTGHDFCVVRLARPGVVYGVDLDTSHFTGNFPPAASIDACVSDADTPPDDAVWETLVPATTLAGNQHHYVDVSNPRAYTHLRVNLYPDGGLARLRVYGQPQRDWSRAARGELVDLAAIENGAYLVAANNEHFGPASRMLMPGRGANMGDGWETRRRREPGNDWAIVALARPGVIRRVEVDTAHFKGNFPDRCSLQAARVAGGTDASLVTQAMFWPMLLGEQPLGMDSVHTFETQLAALGPVTHVRLNIHPDGGVSRLRLWGELA</sequence>
<gene>
    <name evidence="1" type="primary">alc2</name>
    <name type="ordered locus">BPSL2945</name>
</gene>
<dbReference type="EC" id="3.5.3.4" evidence="1"/>
<dbReference type="EMBL" id="BX571965">
    <property type="protein sequence ID" value="CAH36955.1"/>
    <property type="molecule type" value="Genomic_DNA"/>
</dbReference>
<dbReference type="RefSeq" id="YP_109539.1">
    <property type="nucleotide sequence ID" value="NC_006350.1"/>
</dbReference>
<dbReference type="SMR" id="Q63QS9"/>
<dbReference type="STRING" id="272560.BPSL2945"/>
<dbReference type="KEGG" id="bps:BPSL2945"/>
<dbReference type="PATRIC" id="fig|272560.51.peg.2335"/>
<dbReference type="eggNOG" id="COG4266">
    <property type="taxonomic scope" value="Bacteria"/>
</dbReference>
<dbReference type="UniPathway" id="UPA00395">
    <property type="reaction ID" value="UER00654"/>
</dbReference>
<dbReference type="Proteomes" id="UP000000605">
    <property type="component" value="Chromosome 1"/>
</dbReference>
<dbReference type="GO" id="GO:0004037">
    <property type="term" value="F:allantoicase activity"/>
    <property type="evidence" value="ECO:0007669"/>
    <property type="project" value="UniProtKB-UniRule"/>
</dbReference>
<dbReference type="GO" id="GO:0000256">
    <property type="term" value="P:allantoin catabolic process"/>
    <property type="evidence" value="ECO:0007669"/>
    <property type="project" value="UniProtKB-UniRule"/>
</dbReference>
<dbReference type="GO" id="GO:0006144">
    <property type="term" value="P:purine nucleobase metabolic process"/>
    <property type="evidence" value="ECO:0007669"/>
    <property type="project" value="UniProtKB-KW"/>
</dbReference>
<dbReference type="Gene3D" id="2.60.120.260">
    <property type="entry name" value="Galactose-binding domain-like"/>
    <property type="match status" value="2"/>
</dbReference>
<dbReference type="HAMAP" id="MF_00813">
    <property type="entry name" value="Allantoicase"/>
    <property type="match status" value="1"/>
</dbReference>
<dbReference type="InterPro" id="IPR005164">
    <property type="entry name" value="Allantoicase"/>
</dbReference>
<dbReference type="InterPro" id="IPR015908">
    <property type="entry name" value="Allantoicase_dom"/>
</dbReference>
<dbReference type="InterPro" id="IPR008979">
    <property type="entry name" value="Galactose-bd-like_sf"/>
</dbReference>
<dbReference type="NCBIfam" id="TIGR02961">
    <property type="entry name" value="allantoicase"/>
    <property type="match status" value="1"/>
</dbReference>
<dbReference type="PANTHER" id="PTHR12045">
    <property type="entry name" value="ALLANTOICASE"/>
    <property type="match status" value="1"/>
</dbReference>
<dbReference type="PANTHER" id="PTHR12045:SF3">
    <property type="entry name" value="INACTIVE ALLANTOICASE-RELATED"/>
    <property type="match status" value="1"/>
</dbReference>
<dbReference type="Pfam" id="PF03561">
    <property type="entry name" value="Allantoicase"/>
    <property type="match status" value="2"/>
</dbReference>
<dbReference type="PIRSF" id="PIRSF016516">
    <property type="entry name" value="Allantoicase"/>
    <property type="match status" value="1"/>
</dbReference>
<dbReference type="SUPFAM" id="SSF49785">
    <property type="entry name" value="Galactose-binding domain-like"/>
    <property type="match status" value="2"/>
</dbReference>
<keyword id="KW-0378">Hydrolase</keyword>
<keyword id="KW-0659">Purine metabolism</keyword>
<keyword id="KW-1185">Reference proteome</keyword>
<accession>Q63QS9</accession>
<name>ALLC2_BURPS</name>
<reference key="1">
    <citation type="journal article" date="2004" name="Proc. Natl. Acad. Sci. U.S.A.">
        <title>Genomic plasticity of the causative agent of melioidosis, Burkholderia pseudomallei.</title>
        <authorList>
            <person name="Holden M.T.G."/>
            <person name="Titball R.W."/>
            <person name="Peacock S.J."/>
            <person name="Cerdeno-Tarraga A.-M."/>
            <person name="Atkins T."/>
            <person name="Crossman L.C."/>
            <person name="Pitt T."/>
            <person name="Churcher C."/>
            <person name="Mungall K.L."/>
            <person name="Bentley S.D."/>
            <person name="Sebaihia M."/>
            <person name="Thomson N.R."/>
            <person name="Bason N."/>
            <person name="Beacham I.R."/>
            <person name="Brooks K."/>
            <person name="Brown K.A."/>
            <person name="Brown N.F."/>
            <person name="Challis G.L."/>
            <person name="Cherevach I."/>
            <person name="Chillingworth T."/>
            <person name="Cronin A."/>
            <person name="Crossett B."/>
            <person name="Davis P."/>
            <person name="DeShazer D."/>
            <person name="Feltwell T."/>
            <person name="Fraser A."/>
            <person name="Hance Z."/>
            <person name="Hauser H."/>
            <person name="Holroyd S."/>
            <person name="Jagels K."/>
            <person name="Keith K.E."/>
            <person name="Maddison M."/>
            <person name="Moule S."/>
            <person name="Price C."/>
            <person name="Quail M.A."/>
            <person name="Rabbinowitsch E."/>
            <person name="Rutherford K."/>
            <person name="Sanders M."/>
            <person name="Simmonds M."/>
            <person name="Songsivilai S."/>
            <person name="Stevens K."/>
            <person name="Tumapa S."/>
            <person name="Vesaratchavest M."/>
            <person name="Whitehead S."/>
            <person name="Yeats C."/>
            <person name="Barrell B.G."/>
            <person name="Oyston P.C.F."/>
            <person name="Parkhill J."/>
        </authorList>
    </citation>
    <scope>NUCLEOTIDE SEQUENCE [LARGE SCALE GENOMIC DNA]</scope>
    <source>
        <strain>K96243</strain>
    </source>
</reference>
<organism>
    <name type="scientific">Burkholderia pseudomallei (strain K96243)</name>
    <dbReference type="NCBI Taxonomy" id="272560"/>
    <lineage>
        <taxon>Bacteria</taxon>
        <taxon>Pseudomonadati</taxon>
        <taxon>Pseudomonadota</taxon>
        <taxon>Betaproteobacteria</taxon>
        <taxon>Burkholderiales</taxon>
        <taxon>Burkholderiaceae</taxon>
        <taxon>Burkholderia</taxon>
        <taxon>pseudomallei group</taxon>
    </lineage>
</organism>
<protein>
    <recommendedName>
        <fullName evidence="1">Probable allantoicase 2</fullName>
        <ecNumber evidence="1">3.5.3.4</ecNumber>
    </recommendedName>
    <alternativeName>
        <fullName evidence="1">Allantoate amidinohydrolase 2</fullName>
    </alternativeName>
</protein>
<feature type="chain" id="PRO_0000205920" description="Probable allantoicase 2">
    <location>
        <begin position="1"/>
        <end position="336"/>
    </location>
</feature>
<evidence type="ECO:0000255" key="1">
    <source>
        <dbReference type="HAMAP-Rule" id="MF_00813"/>
    </source>
</evidence>
<proteinExistence type="inferred from homology"/>